<comment type="function">
    <text evidence="2">Factor XII is a serum glycoprotein that participates in the initiation of blood coagulation, fibrinolysis, and the generation of bradykinin and angiotensin. Prekallikrein is cleaved by factor XII to form kallikrein, which then cleaves factor XII first to alpha-factor XIIa and then to beta-factor XIIa. Alpha-factor XIIa activates factor XI to factor XIa (By similarity).</text>
</comment>
<comment type="catalytic activity">
    <reaction evidence="2">
        <text>Selective cleavage of Arg-|-Ile bonds in factor VII to form factor VIIa and factor XI to form factor XIa.</text>
        <dbReference type="EC" id="3.4.21.38"/>
    </reaction>
</comment>
<comment type="activity regulation">
    <text evidence="2">Activity is promoted in the presence of negatively charged surfaces.</text>
</comment>
<comment type="subunit">
    <text evidence="2">Interacts with HRG; the interaction, which is enhanced in the presence of zinc ions and inhibited by heparin-binding, inhibits factor XII autoactivation and contact-initiated coagulation.</text>
</comment>
<comment type="subcellular location">
    <subcellularLocation>
        <location>Secreted</location>
    </subcellularLocation>
</comment>
<comment type="PTM">
    <text evidence="1">O- and N-glycosylated.</text>
</comment>
<comment type="similarity">
    <text evidence="6">Belongs to the peptidase S1 family.</text>
</comment>
<gene>
    <name type="primary">F12</name>
</gene>
<proteinExistence type="evidence at protein level"/>
<reference key="1">
    <citation type="submission" date="2006-08" db="EMBL/GenBank/DDBJ databases">
        <authorList>
            <consortium name="NIH - Mammalian Gene Collection (MGC) project"/>
        </authorList>
    </citation>
    <scope>NUCLEOTIDE SEQUENCE [LARGE SCALE MRNA]</scope>
    <source>
        <strain>Hereford</strain>
        <tissue>Fetal liver</tissue>
    </source>
</reference>
<reference key="2">
    <citation type="journal article" date="1994" name="Biochim. Biophys. Acta">
        <title>Primary structure of bovine Hageman factor (blood coagulation factor XII): comparison with human and guinea pig molecules.</title>
        <authorList>
            <person name="Shibuya Y."/>
            <person name="Semba U."/>
            <person name="Okabe H."/>
            <person name="Kambara T."/>
            <person name="Yamamoto T."/>
        </authorList>
    </citation>
    <scope>NUCLEOTIDE SEQUENCE [MRNA] OF 11-612</scope>
    <source>
        <tissue>Liver</tissue>
    </source>
</reference>
<reference key="3">
    <citation type="journal article" date="1977" name="Biochemistry">
        <title>Isolation and characterization of bovine factor XII (Hageman factor).</title>
        <authorList>
            <person name="Fujikawa K."/>
            <person name="Walsh A.K."/>
            <person name="Davie W.E."/>
        </authorList>
    </citation>
    <scope>PROTEIN SEQUENCE OF 20-31; 369-383 AND 544-569</scope>
</reference>
<name>FA12_BOVIN</name>
<sequence length="612" mass="67160">MRALLLLGALLVSLESTVSTPPWKGPKKHKLTDSEHTVVLTVTGEPCHFPFQYHRQLHHKCIHRGRPGPRPWCATTPNFEKDQRWAYCLEPKKVKDHCSKHNPCQKGGTCVNMPDGPRCICADHFTGKHCQKEKCFEPQFFRFFHENEIWHRLEPAGVVKCQCKGPNAQCKPLASQVCRTNPCLNGGSCLQAEGHRLCRCAPSFAGRLCDVDLKASCYDDRDRGLSYRGMAGTTLSGAPCQSWASEATYWNVTAEQVLNWGLGDHAFCRASTPPRGYRNPDNDTRPLCFIWKGDRLSWNYCRLAPCQAAAGHEHFPLPSPSALQKPESTTQTPLPSLTSGWCSPTPLASGGPGGCGQRLRKWLSSLNRVVGGLVALPGAHPYIAALYWDQHFCAGSLIAPCWVLTAAHCLQNRPAPKELTVVLGQDRHNQSCEQCQTLAVRDYRLHEAFSPITYQHDLALVRLQESADGCCAHPSPFVQPVCLPSTAARPAESEAAVCEVAGWGHQFEGGEYSSFLQEAQVPLIDPQRCSAPDVHGAAFTQGMLCAGFLEGGTDACQGDSGGPLVCEDETPERQLILRGIVSWGSGCGNRLKPGVYTDVANYLAWIREHTAS</sequence>
<organism>
    <name type="scientific">Bos taurus</name>
    <name type="common">Bovine</name>
    <dbReference type="NCBI Taxonomy" id="9913"/>
    <lineage>
        <taxon>Eukaryota</taxon>
        <taxon>Metazoa</taxon>
        <taxon>Chordata</taxon>
        <taxon>Craniata</taxon>
        <taxon>Vertebrata</taxon>
        <taxon>Euteleostomi</taxon>
        <taxon>Mammalia</taxon>
        <taxon>Eutheria</taxon>
        <taxon>Laurasiatheria</taxon>
        <taxon>Artiodactyla</taxon>
        <taxon>Ruminantia</taxon>
        <taxon>Pecora</taxon>
        <taxon>Bovidae</taxon>
        <taxon>Bovinae</taxon>
        <taxon>Bos</taxon>
    </lineage>
</organism>
<feature type="signal peptide" evidence="9">
    <location>
        <begin position="1"/>
        <end position="19"/>
    </location>
</feature>
<feature type="chain" id="PRO_0000027829" description="Coagulation factor XIIa heavy chain">
    <location>
        <begin position="20"/>
        <end position="368"/>
    </location>
</feature>
<feature type="chain" id="PRO_0000027830" description="Coagulation factor XIIa light chain">
    <location>
        <begin position="369"/>
        <end position="612"/>
    </location>
</feature>
<feature type="domain" description="Fibronectin type-II" evidence="7 8">
    <location>
        <begin position="42"/>
        <end position="90"/>
    </location>
</feature>
<feature type="domain" description="EGF-like 1" evidence="4">
    <location>
        <begin position="94"/>
        <end position="131"/>
    </location>
</feature>
<feature type="domain" description="Fibronectin type-I" evidence="7">
    <location>
        <begin position="133"/>
        <end position="173"/>
    </location>
</feature>
<feature type="domain" description="EGF-like 2" evidence="4">
    <location>
        <begin position="174"/>
        <end position="210"/>
    </location>
</feature>
<feature type="domain" description="Kringle" evidence="5">
    <location>
        <begin position="217"/>
        <end position="306"/>
    </location>
</feature>
<feature type="domain" description="Peptidase S1" evidence="6">
    <location>
        <begin position="369"/>
        <end position="611"/>
    </location>
</feature>
<feature type="active site" description="Charge relay system" evidence="1">
    <location>
        <position position="408"/>
    </location>
</feature>
<feature type="active site" description="Charge relay system" evidence="1">
    <location>
        <position position="457"/>
    </location>
</feature>
<feature type="active site" description="Charge relay system" evidence="1">
    <location>
        <position position="560"/>
    </location>
</feature>
<feature type="glycosylation site" description="O-linked (Fuc) threonine" evidence="1">
    <location>
        <position position="109"/>
    </location>
</feature>
<feature type="glycosylation site" description="N-linked (GlcNAc...) asparagine" evidence="3">
    <location>
        <position position="251"/>
    </location>
</feature>
<feature type="glycosylation site" description="N-linked (GlcNAc...) asparagine" evidence="3">
    <location>
        <position position="282"/>
    </location>
</feature>
<feature type="glycosylation site" description="N-linked (GlcNAc...) asparagine" evidence="3">
    <location>
        <position position="429"/>
    </location>
</feature>
<feature type="disulfide bond" evidence="1">
    <location>
        <begin position="47"/>
        <end position="73"/>
    </location>
</feature>
<feature type="disulfide bond" evidence="1">
    <location>
        <begin position="61"/>
        <end position="88"/>
    </location>
</feature>
<feature type="disulfide bond" evidence="1">
    <location>
        <begin position="98"/>
        <end position="110"/>
    </location>
</feature>
<feature type="disulfide bond" evidence="1">
    <location>
        <begin position="104"/>
        <end position="119"/>
    </location>
</feature>
<feature type="disulfide bond" evidence="1">
    <location>
        <begin position="121"/>
        <end position="130"/>
    </location>
</feature>
<feature type="disulfide bond" evidence="1">
    <location>
        <begin position="135"/>
        <end position="163"/>
    </location>
</feature>
<feature type="disulfide bond" evidence="1">
    <location>
        <begin position="161"/>
        <end position="170"/>
    </location>
</feature>
<feature type="disulfide bond" evidence="1">
    <location>
        <begin position="178"/>
        <end position="189"/>
    </location>
</feature>
<feature type="disulfide bond" evidence="1">
    <location>
        <begin position="183"/>
        <end position="198"/>
    </location>
</feature>
<feature type="disulfide bond" evidence="1">
    <location>
        <begin position="200"/>
        <end position="209"/>
    </location>
</feature>
<feature type="disulfide bond" evidence="1">
    <location>
        <begin position="217"/>
        <end position="306"/>
    </location>
</feature>
<feature type="disulfide bond" evidence="1">
    <location>
        <begin position="240"/>
        <end position="288"/>
    </location>
</feature>
<feature type="disulfide bond" evidence="1">
    <location>
        <begin position="268"/>
        <end position="301"/>
    </location>
</feature>
<feature type="disulfide bond" evidence="1">
    <location>
        <begin position="355"/>
        <end position="482"/>
    </location>
</feature>
<feature type="disulfide bond" evidence="1">
    <location>
        <begin position="393"/>
        <end position="409"/>
    </location>
</feature>
<feature type="disulfide bond" evidence="1">
    <location>
        <begin position="401"/>
        <end position="471"/>
    </location>
</feature>
<feature type="disulfide bond" evidence="1">
    <location>
        <begin position="432"/>
        <end position="435"/>
    </location>
</feature>
<feature type="disulfide bond" evidence="1">
    <location>
        <begin position="498"/>
        <end position="566"/>
    </location>
</feature>
<feature type="disulfide bond" evidence="1">
    <location>
        <begin position="529"/>
        <end position="545"/>
    </location>
</feature>
<feature type="disulfide bond" evidence="1">
    <location>
        <begin position="556"/>
        <end position="587"/>
    </location>
</feature>
<feature type="sequence conflict" description="In Ref. 2; AAB30804." evidence="10" ref="2">
    <original>LVSLESTV</original>
    <variation>GRVGGRVG</variation>
    <location>
        <begin position="11"/>
        <end position="18"/>
    </location>
</feature>
<feature type="sequence conflict" description="In Ref. 2; AAB30804." evidence="10" ref="2">
    <original>D</original>
    <variation>E</variation>
    <location>
        <position position="33"/>
    </location>
</feature>
<feature type="sequence conflict" description="In Ref. 2; AAB30804." evidence="10" ref="2">
    <original>R</original>
    <variation>Q</variation>
    <location>
        <position position="70"/>
    </location>
</feature>
<feature type="sequence conflict" description="In Ref. 2; AAB30804." evidence="10" ref="2">
    <original>G</original>
    <variation>D</variation>
    <location>
        <position position="187"/>
    </location>
</feature>
<feature type="sequence conflict" description="In Ref. 2; AAB30804." evidence="10" ref="2">
    <location>
        <begin position="270"/>
        <end position="278"/>
    </location>
</feature>
<feature type="sequence conflict" description="In Ref. 2; AAB30804." evidence="10" ref="2">
    <original>L</original>
    <variation>W</variation>
    <location>
        <position position="287"/>
    </location>
</feature>
<accession>P98140</accession>
<accession>Q0P5I3</accession>
<keyword id="KW-0094">Blood coagulation</keyword>
<keyword id="KW-0903">Direct protein sequencing</keyword>
<keyword id="KW-1015">Disulfide bond</keyword>
<keyword id="KW-0245">EGF-like domain</keyword>
<keyword id="KW-0280">Fibrinolysis</keyword>
<keyword id="KW-0325">Glycoprotein</keyword>
<keyword id="KW-0356">Hemostasis</keyword>
<keyword id="KW-0378">Hydrolase</keyword>
<keyword id="KW-0420">Kringle</keyword>
<keyword id="KW-0645">Protease</keyword>
<keyword id="KW-1185">Reference proteome</keyword>
<keyword id="KW-0677">Repeat</keyword>
<keyword id="KW-0964">Secreted</keyword>
<keyword id="KW-0720">Serine protease</keyword>
<keyword id="KW-0732">Signal</keyword>
<keyword id="KW-0865">Zymogen</keyword>
<protein>
    <recommendedName>
        <fullName>Coagulation factor XII</fullName>
        <ecNumber evidence="2">3.4.21.38</ecNumber>
    </recommendedName>
    <alternativeName>
        <fullName>Hageman factor</fullName>
        <shortName>HAF</shortName>
    </alternativeName>
    <component>
        <recommendedName>
            <fullName>Coagulation factor XIIa heavy chain</fullName>
        </recommendedName>
    </component>
    <component>
        <recommendedName>
            <fullName>Coagulation factor XIIa light chain</fullName>
        </recommendedName>
    </component>
</protein>
<dbReference type="EC" id="3.4.21.38" evidence="2"/>
<dbReference type="EMBL" id="BC120000">
    <property type="protein sequence ID" value="AAI20001.1"/>
    <property type="molecule type" value="mRNA"/>
</dbReference>
<dbReference type="EMBL" id="S70164">
    <property type="protein sequence ID" value="AAB30804.2"/>
    <property type="molecule type" value="mRNA"/>
</dbReference>
<dbReference type="PIR" id="S45281">
    <property type="entry name" value="S45281"/>
</dbReference>
<dbReference type="RefSeq" id="NP_001068587.1">
    <property type="nucleotide sequence ID" value="NM_001075119.2"/>
</dbReference>
<dbReference type="SMR" id="P98140"/>
<dbReference type="FunCoup" id="P98140">
    <property type="interactions" value="120"/>
</dbReference>
<dbReference type="STRING" id="9913.ENSBTAP00000025122"/>
<dbReference type="ChEMBL" id="CHEMBL3533"/>
<dbReference type="MEROPS" id="S01.211"/>
<dbReference type="GlyCosmos" id="P98140">
    <property type="glycosylation" value="4 sites, No reported glycans"/>
</dbReference>
<dbReference type="GlyGen" id="P98140">
    <property type="glycosylation" value="4 sites"/>
</dbReference>
<dbReference type="PaxDb" id="9913-ENSBTAP00000025122"/>
<dbReference type="GeneID" id="280789"/>
<dbReference type="KEGG" id="bta:280789"/>
<dbReference type="CTD" id="2161"/>
<dbReference type="eggNOG" id="KOG1217">
    <property type="taxonomic scope" value="Eukaryota"/>
</dbReference>
<dbReference type="eggNOG" id="KOG3627">
    <property type="taxonomic scope" value="Eukaryota"/>
</dbReference>
<dbReference type="InParanoid" id="P98140"/>
<dbReference type="OrthoDB" id="9925451at2759"/>
<dbReference type="Proteomes" id="UP000009136">
    <property type="component" value="Unplaced"/>
</dbReference>
<dbReference type="GO" id="GO:0005615">
    <property type="term" value="C:extracellular space"/>
    <property type="evidence" value="ECO:0000318"/>
    <property type="project" value="GO_Central"/>
</dbReference>
<dbReference type="GO" id="GO:0005791">
    <property type="term" value="C:rough endoplasmic reticulum"/>
    <property type="evidence" value="ECO:0000318"/>
    <property type="project" value="GO_Central"/>
</dbReference>
<dbReference type="GO" id="GO:0005509">
    <property type="term" value="F:calcium ion binding"/>
    <property type="evidence" value="ECO:0007669"/>
    <property type="project" value="InterPro"/>
</dbReference>
<dbReference type="GO" id="GO:0004252">
    <property type="term" value="F:serine-type endopeptidase activity"/>
    <property type="evidence" value="ECO:0000318"/>
    <property type="project" value="GO_Central"/>
</dbReference>
<dbReference type="GO" id="GO:0007596">
    <property type="term" value="P:blood coagulation"/>
    <property type="evidence" value="ECO:0000318"/>
    <property type="project" value="GO_Central"/>
</dbReference>
<dbReference type="GO" id="GO:0042730">
    <property type="term" value="P:fibrinolysis"/>
    <property type="evidence" value="ECO:0007669"/>
    <property type="project" value="UniProtKB-KW"/>
</dbReference>
<dbReference type="GO" id="GO:0031638">
    <property type="term" value="P:zymogen activation"/>
    <property type="evidence" value="ECO:0000318"/>
    <property type="project" value="GO_Central"/>
</dbReference>
<dbReference type="CDD" id="cd00054">
    <property type="entry name" value="EGF_CA"/>
    <property type="match status" value="1"/>
</dbReference>
<dbReference type="CDD" id="cd00061">
    <property type="entry name" value="FN1"/>
    <property type="match status" value="1"/>
</dbReference>
<dbReference type="CDD" id="cd00062">
    <property type="entry name" value="FN2"/>
    <property type="match status" value="1"/>
</dbReference>
<dbReference type="CDD" id="cd00190">
    <property type="entry name" value="Tryp_SPc"/>
    <property type="match status" value="1"/>
</dbReference>
<dbReference type="FunFam" id="2.10.10.10:FF:000010">
    <property type="entry name" value="Coagulation factor XII"/>
    <property type="match status" value="1"/>
</dbReference>
<dbReference type="FunFam" id="2.10.25.10:FF:000576">
    <property type="entry name" value="Coagulation factor XII"/>
    <property type="match status" value="1"/>
</dbReference>
<dbReference type="FunFam" id="2.40.10.10:FF:000097">
    <property type="entry name" value="Coagulation factor XII"/>
    <property type="match status" value="1"/>
</dbReference>
<dbReference type="FunFam" id="2.40.10.10:FF:000098">
    <property type="entry name" value="Coagulation factor XII"/>
    <property type="match status" value="1"/>
</dbReference>
<dbReference type="FunFam" id="2.40.20.10:FF:000016">
    <property type="entry name" value="Coagulation factor XII"/>
    <property type="match status" value="1"/>
</dbReference>
<dbReference type="FunFam" id="2.10.25.10:FF:000338">
    <property type="entry name" value="hepatocyte growth factor activator"/>
    <property type="match status" value="1"/>
</dbReference>
<dbReference type="Gene3D" id="2.10.10.10">
    <property type="entry name" value="Fibronectin, type II, collagen-binding"/>
    <property type="match status" value="1"/>
</dbReference>
<dbReference type="Gene3D" id="2.10.25.10">
    <property type="entry name" value="Laminin"/>
    <property type="match status" value="2"/>
</dbReference>
<dbReference type="Gene3D" id="2.40.20.10">
    <property type="entry name" value="Plasminogen Kringle 4"/>
    <property type="match status" value="1"/>
</dbReference>
<dbReference type="Gene3D" id="2.40.10.10">
    <property type="entry name" value="Trypsin-like serine proteases"/>
    <property type="match status" value="2"/>
</dbReference>
<dbReference type="InterPro" id="IPR014394">
    <property type="entry name" value="Coagulation_fac_XII/HGFA"/>
</dbReference>
<dbReference type="InterPro" id="IPR001881">
    <property type="entry name" value="EGF-like_Ca-bd_dom"/>
</dbReference>
<dbReference type="InterPro" id="IPR000742">
    <property type="entry name" value="EGF-like_dom"/>
</dbReference>
<dbReference type="InterPro" id="IPR000083">
    <property type="entry name" value="Fibronectin_type1"/>
</dbReference>
<dbReference type="InterPro" id="IPR000562">
    <property type="entry name" value="FN_type2_dom"/>
</dbReference>
<dbReference type="InterPro" id="IPR036943">
    <property type="entry name" value="FN_type2_sf"/>
</dbReference>
<dbReference type="InterPro" id="IPR000001">
    <property type="entry name" value="Kringle"/>
</dbReference>
<dbReference type="InterPro" id="IPR013806">
    <property type="entry name" value="Kringle-like"/>
</dbReference>
<dbReference type="InterPro" id="IPR038178">
    <property type="entry name" value="Kringle_sf"/>
</dbReference>
<dbReference type="InterPro" id="IPR009003">
    <property type="entry name" value="Peptidase_S1_PA"/>
</dbReference>
<dbReference type="InterPro" id="IPR043504">
    <property type="entry name" value="Peptidase_S1_PA_chymotrypsin"/>
</dbReference>
<dbReference type="InterPro" id="IPR001314">
    <property type="entry name" value="Peptidase_S1A"/>
</dbReference>
<dbReference type="InterPro" id="IPR050127">
    <property type="entry name" value="Serine_Proteases_S1"/>
</dbReference>
<dbReference type="InterPro" id="IPR001254">
    <property type="entry name" value="Trypsin_dom"/>
</dbReference>
<dbReference type="InterPro" id="IPR018114">
    <property type="entry name" value="TRYPSIN_HIS"/>
</dbReference>
<dbReference type="InterPro" id="IPR033116">
    <property type="entry name" value="TRYPSIN_SER"/>
</dbReference>
<dbReference type="PANTHER" id="PTHR24264:SF46">
    <property type="entry name" value="COAGULATION FACTOR XII"/>
    <property type="match status" value="1"/>
</dbReference>
<dbReference type="PANTHER" id="PTHR24264">
    <property type="entry name" value="TRYPSIN-RELATED"/>
    <property type="match status" value="1"/>
</dbReference>
<dbReference type="Pfam" id="PF00008">
    <property type="entry name" value="EGF"/>
    <property type="match status" value="2"/>
</dbReference>
<dbReference type="Pfam" id="PF00039">
    <property type="entry name" value="fn1"/>
    <property type="match status" value="1"/>
</dbReference>
<dbReference type="Pfam" id="PF00040">
    <property type="entry name" value="fn2"/>
    <property type="match status" value="1"/>
</dbReference>
<dbReference type="Pfam" id="PF00051">
    <property type="entry name" value="Kringle"/>
    <property type="match status" value="1"/>
</dbReference>
<dbReference type="Pfam" id="PF00089">
    <property type="entry name" value="Trypsin"/>
    <property type="match status" value="1"/>
</dbReference>
<dbReference type="PIRSF" id="PIRSF001146">
    <property type="entry name" value="Factor_XII_HGFA"/>
    <property type="match status" value="1"/>
</dbReference>
<dbReference type="PRINTS" id="PR00722">
    <property type="entry name" value="CHYMOTRYPSIN"/>
</dbReference>
<dbReference type="PRINTS" id="PR00013">
    <property type="entry name" value="FNTYPEII"/>
</dbReference>
<dbReference type="PRINTS" id="PR00018">
    <property type="entry name" value="KRINGLE"/>
</dbReference>
<dbReference type="SMART" id="SM00181">
    <property type="entry name" value="EGF"/>
    <property type="match status" value="2"/>
</dbReference>
<dbReference type="SMART" id="SM00179">
    <property type="entry name" value="EGF_CA"/>
    <property type="match status" value="2"/>
</dbReference>
<dbReference type="SMART" id="SM00058">
    <property type="entry name" value="FN1"/>
    <property type="match status" value="1"/>
</dbReference>
<dbReference type="SMART" id="SM00059">
    <property type="entry name" value="FN2"/>
    <property type="match status" value="1"/>
</dbReference>
<dbReference type="SMART" id="SM00130">
    <property type="entry name" value="KR"/>
    <property type="match status" value="1"/>
</dbReference>
<dbReference type="SMART" id="SM00020">
    <property type="entry name" value="Tryp_SPc"/>
    <property type="match status" value="1"/>
</dbReference>
<dbReference type="SUPFAM" id="SSF57196">
    <property type="entry name" value="EGF/Laminin"/>
    <property type="match status" value="1"/>
</dbReference>
<dbReference type="SUPFAM" id="SSF57440">
    <property type="entry name" value="Kringle-like"/>
    <property type="match status" value="2"/>
</dbReference>
<dbReference type="SUPFAM" id="SSF50494">
    <property type="entry name" value="Trypsin-like serine proteases"/>
    <property type="match status" value="1"/>
</dbReference>
<dbReference type="PROSITE" id="PS00022">
    <property type="entry name" value="EGF_1"/>
    <property type="match status" value="2"/>
</dbReference>
<dbReference type="PROSITE" id="PS50026">
    <property type="entry name" value="EGF_3"/>
    <property type="match status" value="2"/>
</dbReference>
<dbReference type="PROSITE" id="PS01253">
    <property type="entry name" value="FN1_1"/>
    <property type="match status" value="1"/>
</dbReference>
<dbReference type="PROSITE" id="PS51091">
    <property type="entry name" value="FN1_2"/>
    <property type="match status" value="1"/>
</dbReference>
<dbReference type="PROSITE" id="PS00023">
    <property type="entry name" value="FN2_1"/>
    <property type="match status" value="1"/>
</dbReference>
<dbReference type="PROSITE" id="PS51092">
    <property type="entry name" value="FN2_2"/>
    <property type="match status" value="1"/>
</dbReference>
<dbReference type="PROSITE" id="PS50070">
    <property type="entry name" value="KRINGLE_2"/>
    <property type="match status" value="1"/>
</dbReference>
<dbReference type="PROSITE" id="PS50240">
    <property type="entry name" value="TRYPSIN_DOM"/>
    <property type="match status" value="1"/>
</dbReference>
<dbReference type="PROSITE" id="PS00134">
    <property type="entry name" value="TRYPSIN_HIS"/>
    <property type="match status" value="1"/>
</dbReference>
<dbReference type="PROSITE" id="PS00135">
    <property type="entry name" value="TRYPSIN_SER"/>
    <property type="match status" value="1"/>
</dbReference>
<evidence type="ECO:0000250" key="1"/>
<evidence type="ECO:0000250" key="2">
    <source>
        <dbReference type="UniProtKB" id="P00748"/>
    </source>
</evidence>
<evidence type="ECO:0000255" key="3"/>
<evidence type="ECO:0000255" key="4">
    <source>
        <dbReference type="PROSITE-ProRule" id="PRU00076"/>
    </source>
</evidence>
<evidence type="ECO:0000255" key="5">
    <source>
        <dbReference type="PROSITE-ProRule" id="PRU00121"/>
    </source>
</evidence>
<evidence type="ECO:0000255" key="6">
    <source>
        <dbReference type="PROSITE-ProRule" id="PRU00274"/>
    </source>
</evidence>
<evidence type="ECO:0000255" key="7">
    <source>
        <dbReference type="PROSITE-ProRule" id="PRU00478"/>
    </source>
</evidence>
<evidence type="ECO:0000255" key="8">
    <source>
        <dbReference type="PROSITE-ProRule" id="PRU00479"/>
    </source>
</evidence>
<evidence type="ECO:0000269" key="9">
    <source>
    </source>
</evidence>
<evidence type="ECO:0000305" key="10"/>